<reference key="1">
    <citation type="submission" date="2000-08" db="EMBL/GenBank/DDBJ databases">
        <authorList>
            <person name="Gao D.Q."/>
            <person name="Kan B."/>
            <person name="Lu C.P."/>
            <person name="Liu Y.Q."/>
            <person name="Wu S.Y."/>
        </authorList>
    </citation>
    <scope>NUCLEOTIDE SEQUENCE [GENOMIC DNA]</scope>
    <source>
        <strain>ET-12</strain>
    </source>
</reference>
<protein>
    <recommendedName>
        <fullName evidence="1">Transcriptional regulator SlyA</fullName>
    </recommendedName>
    <alternativeName>
        <fullName>Edwardsiella hemolysin activator</fullName>
    </alternativeName>
</protein>
<organism>
    <name type="scientific">Edwardsiella tarda</name>
    <dbReference type="NCBI Taxonomy" id="636"/>
    <lineage>
        <taxon>Bacteria</taxon>
        <taxon>Pseudomonadati</taxon>
        <taxon>Pseudomonadota</taxon>
        <taxon>Gammaproteobacteria</taxon>
        <taxon>Enterobacterales</taxon>
        <taxon>Hafniaceae</taxon>
        <taxon>Edwardsiella</taxon>
    </lineage>
</organism>
<sequence length="143" mass="16331">MESTLGSDLSRLVRVWRALIDQRLKPLELTQTHWVTLYNIHRLPPDQSQIQLAKAIGIEQPSLVRTLDQLEDKGLITRHICANDRRAKRIKLTDDAEPVIKEVTGVISLTRSEILDGISTDEIALLTNLVERLEQNIIHLQNK</sequence>
<comment type="function">
    <text evidence="1">Transcription regulator that can specifically activate or repress expression of target genes.</text>
</comment>
<comment type="subunit">
    <text evidence="1">Homodimer.</text>
</comment>
<comment type="similarity">
    <text evidence="1">Belongs to the SlyA family.</text>
</comment>
<accession>Q9F6B2</accession>
<feature type="chain" id="PRO_0000054387" description="Transcriptional regulator SlyA">
    <location>
        <begin position="1"/>
        <end position="143"/>
    </location>
</feature>
<feature type="domain" description="HTH marR-type" evidence="1">
    <location>
        <begin position="2"/>
        <end position="135"/>
    </location>
</feature>
<feature type="DNA-binding region" description="H-T-H motif" evidence="1">
    <location>
        <begin position="49"/>
        <end position="72"/>
    </location>
</feature>
<proteinExistence type="inferred from homology"/>
<name>SLYA_EDWTA</name>
<gene>
    <name evidence="1" type="primary">slyA</name>
    <name type="synonym">eha</name>
</gene>
<keyword id="KW-0010">Activator</keyword>
<keyword id="KW-0238">DNA-binding</keyword>
<keyword id="KW-0678">Repressor</keyword>
<keyword id="KW-0804">Transcription</keyword>
<keyword id="KW-0805">Transcription regulation</keyword>
<dbReference type="EMBL" id="AF295331">
    <property type="protein sequence ID" value="AAG10081.1"/>
    <property type="molecule type" value="Genomic_DNA"/>
</dbReference>
<dbReference type="RefSeq" id="WP_035600831.1">
    <property type="nucleotide sequence ID" value="NZ_AP028090.1"/>
</dbReference>
<dbReference type="SMR" id="Q9F6B2"/>
<dbReference type="STRING" id="636.AAW15_08045"/>
<dbReference type="GeneID" id="93124132"/>
<dbReference type="PATRIC" id="fig|636.8.peg.1679"/>
<dbReference type="OrthoDB" id="5296557at2"/>
<dbReference type="GO" id="GO:0003677">
    <property type="term" value="F:DNA binding"/>
    <property type="evidence" value="ECO:0007669"/>
    <property type="project" value="UniProtKB-UniRule"/>
</dbReference>
<dbReference type="GO" id="GO:0003700">
    <property type="term" value="F:DNA-binding transcription factor activity"/>
    <property type="evidence" value="ECO:0007669"/>
    <property type="project" value="UniProtKB-UniRule"/>
</dbReference>
<dbReference type="GO" id="GO:0006950">
    <property type="term" value="P:response to stress"/>
    <property type="evidence" value="ECO:0007669"/>
    <property type="project" value="TreeGrafter"/>
</dbReference>
<dbReference type="FunFam" id="1.10.10.10:FF:000261">
    <property type="entry name" value="Transcriptional regulator SlyA"/>
    <property type="match status" value="1"/>
</dbReference>
<dbReference type="Gene3D" id="1.10.10.10">
    <property type="entry name" value="Winged helix-like DNA-binding domain superfamily/Winged helix DNA-binding domain"/>
    <property type="match status" value="1"/>
</dbReference>
<dbReference type="HAMAP" id="MF_01819">
    <property type="entry name" value="HTH_type_SlyA"/>
    <property type="match status" value="1"/>
</dbReference>
<dbReference type="InterPro" id="IPR000835">
    <property type="entry name" value="HTH_MarR-typ"/>
</dbReference>
<dbReference type="InterPro" id="IPR039422">
    <property type="entry name" value="MarR/SlyA-like"/>
</dbReference>
<dbReference type="InterPro" id="IPR023187">
    <property type="entry name" value="Tscrpt_reg_MarR-type_CS"/>
</dbReference>
<dbReference type="InterPro" id="IPR023071">
    <property type="entry name" value="Tscrpt_reg_SlyA"/>
</dbReference>
<dbReference type="InterPro" id="IPR036388">
    <property type="entry name" value="WH-like_DNA-bd_sf"/>
</dbReference>
<dbReference type="InterPro" id="IPR036390">
    <property type="entry name" value="WH_DNA-bd_sf"/>
</dbReference>
<dbReference type="NCBIfam" id="NF002926">
    <property type="entry name" value="PRK03573.1"/>
    <property type="match status" value="1"/>
</dbReference>
<dbReference type="PANTHER" id="PTHR33164:SF64">
    <property type="entry name" value="TRANSCRIPTIONAL REGULATOR SLYA"/>
    <property type="match status" value="1"/>
</dbReference>
<dbReference type="PANTHER" id="PTHR33164">
    <property type="entry name" value="TRANSCRIPTIONAL REGULATOR, MARR FAMILY"/>
    <property type="match status" value="1"/>
</dbReference>
<dbReference type="Pfam" id="PF01047">
    <property type="entry name" value="MarR"/>
    <property type="match status" value="1"/>
</dbReference>
<dbReference type="PRINTS" id="PR00598">
    <property type="entry name" value="HTHMARR"/>
</dbReference>
<dbReference type="SMART" id="SM00347">
    <property type="entry name" value="HTH_MARR"/>
    <property type="match status" value="1"/>
</dbReference>
<dbReference type="SUPFAM" id="SSF46785">
    <property type="entry name" value="Winged helix' DNA-binding domain"/>
    <property type="match status" value="1"/>
</dbReference>
<dbReference type="PROSITE" id="PS01117">
    <property type="entry name" value="HTH_MARR_1"/>
    <property type="match status" value="1"/>
</dbReference>
<dbReference type="PROSITE" id="PS50995">
    <property type="entry name" value="HTH_MARR_2"/>
    <property type="match status" value="1"/>
</dbReference>
<evidence type="ECO:0000255" key="1">
    <source>
        <dbReference type="HAMAP-Rule" id="MF_01819"/>
    </source>
</evidence>